<keyword id="KW-0963">Cytoplasm</keyword>
<keyword id="KW-0539">Nucleus</keyword>
<keyword id="KW-0597">Phosphoprotein</keyword>
<keyword id="KW-1185">Reference proteome</keyword>
<keyword id="KW-0819">tRNA processing</keyword>
<gene>
    <name type="primary">Elp1</name>
    <name type="synonym">Ikap</name>
    <name type="synonym">Ikbkap</name>
</gene>
<feature type="chain" id="PRO_0000283997" description="Elongator complex protein 1">
    <location>
        <begin position="1"/>
        <end position="1331"/>
    </location>
</feature>
<feature type="region of interest" description="Mediates dimerization" evidence="2">
    <location>
        <begin position="884"/>
        <end position="1331"/>
    </location>
</feature>
<feature type="region of interest" description="Disordered" evidence="5">
    <location>
        <begin position="1167"/>
        <end position="1207"/>
    </location>
</feature>
<feature type="region of interest" description="Required for binding to tRNA" evidence="3">
    <location>
        <begin position="1190"/>
        <end position="1208"/>
    </location>
</feature>
<feature type="compositionally biased region" description="Polar residues" evidence="5">
    <location>
        <begin position="1167"/>
        <end position="1176"/>
    </location>
</feature>
<feature type="compositionally biased region" description="Basic residues" evidence="5">
    <location>
        <begin position="1193"/>
        <end position="1205"/>
    </location>
</feature>
<feature type="modified residue" description="Phosphoserine" evidence="2">
    <location>
        <position position="803"/>
    </location>
</feature>
<feature type="modified residue" description="Phosphoserine" evidence="2">
    <location>
        <position position="1170"/>
    </location>
</feature>
<feature type="modified residue" description="Phosphoserine" evidence="2">
    <location>
        <position position="1173"/>
    </location>
</feature>
<name>ELP1_RAT</name>
<comment type="function">
    <text evidence="2 3 4">Component of the elongator complex which is required for multiple tRNA modifications, including mcm5U (5-methoxycarbonylmethyl uridine), mcm5s2U (5-methoxycarbonylmethyl-2-thiouridine), and ncm5U (5-carbamoylmethyl uridine) (By similarity). The elongator complex catalyzes formation of carboxymethyluridine in the wobble base at position 34 in tRNAs (By similarity). Regulates the migration and branching of projection neurons in the developing cerebral cortex, through a process depending on alpha-tubulin acetylation (By similarity). ELP1 binds to tRNA, mediating interaction of the elongator complex with tRNA (By similarity). May act as a scaffold protein that assembles active IKK-MAP3K14 complexes (IKKA, IKKB and MAP3K14/NIK) (By similarity).</text>
</comment>
<comment type="pathway">
    <text evidence="2">tRNA modification; 5-methoxycarbonylmethyl-2-thiouridine-tRNA biosynthesis.</text>
</comment>
<comment type="subunit">
    <text evidence="2">Homodimer; dimerization promotes ELP1 stability and elongator complex formation. Component of the elongator complex which consists of ELP1, ELP2, ELP3, ELP4, ELP5 and ELP6. Interacts preferentially with MAP3K14/NIK followed by IKK-alpha and IKK-beta.</text>
</comment>
<comment type="subcellular location">
    <subcellularLocation>
        <location evidence="2">Cytoplasm</location>
    </subcellularLocation>
    <subcellularLocation>
        <location evidence="2">Nucleus</location>
    </subcellularLocation>
</comment>
<comment type="PTM">
    <text evidence="1">Phosphorylated.</text>
</comment>
<comment type="similarity">
    <text evidence="6">Belongs to the ELP1/IKA1 family.</text>
</comment>
<comment type="caution">
    <text evidence="2">The elongator complex was originally thought to play a role in transcription elongation. However, it is no longer thought to play a direct role in this process and its primary function is thought to be in tRNA modification.</text>
</comment>
<accession>Q8VHU4</accession>
<protein>
    <recommendedName>
        <fullName>Elongator complex protein 1</fullName>
        <shortName>ELP1</shortName>
    </recommendedName>
    <alternativeName>
        <fullName>IkappaB kinase complex-associated protein</fullName>
        <shortName>IKK complex-associated protein</shortName>
    </alternativeName>
</protein>
<organism>
    <name type="scientific">Rattus norvegicus</name>
    <name type="common">Rat</name>
    <dbReference type="NCBI Taxonomy" id="10116"/>
    <lineage>
        <taxon>Eukaryota</taxon>
        <taxon>Metazoa</taxon>
        <taxon>Chordata</taxon>
        <taxon>Craniata</taxon>
        <taxon>Vertebrata</taxon>
        <taxon>Euteleostomi</taxon>
        <taxon>Mammalia</taxon>
        <taxon>Eutheria</taxon>
        <taxon>Euarchontoglires</taxon>
        <taxon>Glires</taxon>
        <taxon>Rodentia</taxon>
        <taxon>Myomorpha</taxon>
        <taxon>Muroidea</taxon>
        <taxon>Muridae</taxon>
        <taxon>Murinae</taxon>
        <taxon>Rattus</taxon>
    </lineage>
</organism>
<sequence length="1331" mass="149171">MRNLKLHQTLEFRDIQAPGKPQCFCLRAEQGTVLIGSERGLTEVDPVKKEVKTEISLVAEGFLPEDGSGCIVGIQDLLDQESVCVATASGDVIVCNVSTQQLECVGNVASGISVMSWSPDQELLLLATAQQTLIMMTRDYEVITEQQIHQDDFGEGKFITVGWGSKDTQFHGSEGRPITFPVQMHESALSWDDHRPQITWRGDGQFFAVSVVCSQTGARKIRVWNREFALQSTSESVPGLGPSLAWKPSGSLIASTQDKPNQQDVVFFEKNGLLHGYFTLPFLKDEVKVNDLLWNADSSVLAVWLEDLPKEGSSTLKSYVQLWTVGNYHWYLKQSLPFSTTGKNQIVSLLWDPVTPGRLHVLCQGWRYLCCDWHWTTDRSSGNSADDLANVAVIDGNKVLVTVFQRTVTPPPMCTYRLLIPHPVNQVMSSAHLGNDLAVLDASNQISVYKCDDKPDMDSTVKLGAVGGTGFKVPLRTPHLEKRYRIQFGNKEEEEDVSPLQFRFLTWIEGDAFLAISHSHSSPQSIIHHLTMAGSEGDEEQGQLNVSSSVTVDGVVIGLCCCSKTKSSAVQLADGQVLKYLWESPSSAVEPWKNSEGRPVRFARPCTQMEAAAIGGEECVLGLTDRCRFFINDTEVASNITSFAVCDDFLLVTTHSHTCQCFSLSGASLKMLQAGLCGSQVPSGEILRKVERGSRIVTVVPQDTKLILQMPRGNLEVVHHRALVLAQIRKWLDKLMFKEAFECMRKLRINLNLIHDHNPKVFLENVETFIKQIDSVNHLNLFFTELKEEDVTKTMYPPPVTKSVQVSTNPDGKKVDLICDAMRVAMETINPRKFCLSILTSHVKKTTPELDIVLQKVHELQGKIPFVPESVSAEEALKYLLLLVDVNELFNHSLGTYDFDLVLMVAEKSQKDPKEYLPFLNTLKKMETNYQRFTIDKYLKRYEKALGHLSKCGPEYFTECLNLIKDKNLYKEALKLYRPDSPQYQAVSVAYGEHLVQELLYEPAGLVFARCGAHEKALEAFLACGSWQQALCMAAQLQMAKDKVAGLARTLAGKLVEQRKHSEAATVLEQYALDYEEAVLLLLEGSAWEEALRLVYKYDRVDIIETSVKPSILEAQKNYMDFLDSQTATFIRHKNRLKVVRELKSQRPRVHVDHEVAHGRETDLFSETSSIRSGSEMSGRYSHSNSRISARSSKNRRKAERKKHSLKEGSPLEGLALLEALSEVVQSIEKLKDEVHAILKVLFLFEFEEQARELQRAFESTLQLMGTALPDIWTLTGQQSSSTPVLGPSSTVNSIMASYQQQKTCVPVLDAWACLPPKIDQRSQWKLSLLE</sequence>
<proteinExistence type="evidence at transcript level"/>
<evidence type="ECO:0000250" key="1"/>
<evidence type="ECO:0000250" key="2">
    <source>
        <dbReference type="UniProtKB" id="O95163"/>
    </source>
</evidence>
<evidence type="ECO:0000250" key="3">
    <source>
        <dbReference type="UniProtKB" id="Q06706"/>
    </source>
</evidence>
<evidence type="ECO:0000250" key="4">
    <source>
        <dbReference type="UniProtKB" id="Q7TT37"/>
    </source>
</evidence>
<evidence type="ECO:0000256" key="5">
    <source>
        <dbReference type="SAM" id="MobiDB-lite"/>
    </source>
</evidence>
<evidence type="ECO:0000305" key="6"/>
<reference key="1">
    <citation type="journal article" date="2001" name="Gene">
        <title>Genomic organization and chromosomal localization of the mouse IKBKAP gene.</title>
        <authorList>
            <person name="Coli R."/>
            <person name="Anderson S.L."/>
            <person name="Volpi S.A."/>
            <person name="Rubin B.Y."/>
        </authorList>
    </citation>
    <scope>NUCLEOTIDE SEQUENCE [MRNA]</scope>
    <source>
        <strain>Sprague-Dawley</strain>
    </source>
</reference>
<dbReference type="EMBL" id="AF388201">
    <property type="protein sequence ID" value="AAL40926.1"/>
    <property type="molecule type" value="mRNA"/>
</dbReference>
<dbReference type="RefSeq" id="NP_543175.1">
    <property type="nucleotide sequence ID" value="NM_080899.1"/>
</dbReference>
<dbReference type="SMR" id="Q8VHU4"/>
<dbReference type="BioGRID" id="250868">
    <property type="interactions" value="1"/>
</dbReference>
<dbReference type="FunCoup" id="Q8VHU4">
    <property type="interactions" value="3687"/>
</dbReference>
<dbReference type="STRING" id="10116.ENSRNOP00000022836"/>
<dbReference type="GlyGen" id="Q8VHU4">
    <property type="glycosylation" value="2 sites"/>
</dbReference>
<dbReference type="iPTMnet" id="Q8VHU4"/>
<dbReference type="PhosphoSitePlus" id="Q8VHU4"/>
<dbReference type="jPOST" id="Q8VHU4"/>
<dbReference type="PaxDb" id="10116-ENSRNOP00000022836"/>
<dbReference type="GeneID" id="140934"/>
<dbReference type="KEGG" id="rno:140934"/>
<dbReference type="AGR" id="RGD:620072"/>
<dbReference type="CTD" id="8518"/>
<dbReference type="RGD" id="620072">
    <property type="gene designation" value="Elp1"/>
</dbReference>
<dbReference type="eggNOG" id="KOG1920">
    <property type="taxonomic scope" value="Eukaryota"/>
</dbReference>
<dbReference type="InParanoid" id="Q8VHU4"/>
<dbReference type="PhylomeDB" id="Q8VHU4"/>
<dbReference type="UniPathway" id="UPA00988"/>
<dbReference type="PRO" id="PR:Q8VHU4"/>
<dbReference type="Proteomes" id="UP000002494">
    <property type="component" value="Unplaced"/>
</dbReference>
<dbReference type="GO" id="GO:0005737">
    <property type="term" value="C:cytoplasm"/>
    <property type="evidence" value="ECO:0000250"/>
    <property type="project" value="UniProtKB"/>
</dbReference>
<dbReference type="GO" id="GO:0005829">
    <property type="term" value="C:cytosol"/>
    <property type="evidence" value="ECO:0000318"/>
    <property type="project" value="GO_Central"/>
</dbReference>
<dbReference type="GO" id="GO:0033588">
    <property type="term" value="C:elongator holoenzyme complex"/>
    <property type="evidence" value="ECO:0000250"/>
    <property type="project" value="UniProtKB"/>
</dbReference>
<dbReference type="GO" id="GO:0005634">
    <property type="term" value="C:nucleus"/>
    <property type="evidence" value="ECO:0007669"/>
    <property type="project" value="UniProtKB-SubCell"/>
</dbReference>
<dbReference type="GO" id="GO:0005524">
    <property type="term" value="F:ATP binding"/>
    <property type="evidence" value="ECO:0000314"/>
    <property type="project" value="RGD"/>
</dbReference>
<dbReference type="GO" id="GO:0004672">
    <property type="term" value="F:protein kinase activity"/>
    <property type="evidence" value="ECO:0000314"/>
    <property type="project" value="RGD"/>
</dbReference>
<dbReference type="GO" id="GO:0000049">
    <property type="term" value="F:tRNA binding"/>
    <property type="evidence" value="ECO:0000318"/>
    <property type="project" value="GO_Central"/>
</dbReference>
<dbReference type="GO" id="GO:0002926">
    <property type="term" value="P:tRNA wobble base 5-methoxycarbonylmethyl-2-thiouridinylation"/>
    <property type="evidence" value="ECO:0000318"/>
    <property type="project" value="GO_Central"/>
</dbReference>
<dbReference type="GO" id="GO:0002098">
    <property type="term" value="P:tRNA wobble uridine modification"/>
    <property type="evidence" value="ECO:0000266"/>
    <property type="project" value="RGD"/>
</dbReference>
<dbReference type="FunFam" id="2.130.10.10:FF:000737">
    <property type="entry name" value="Elongator complex protein 1"/>
    <property type="match status" value="1"/>
</dbReference>
<dbReference type="Gene3D" id="2.130.10.10">
    <property type="entry name" value="YVTN repeat-like/Quinoprotein amine dehydrogenase"/>
    <property type="match status" value="1"/>
</dbReference>
<dbReference type="InterPro" id="IPR056167">
    <property type="entry name" value="A-sol_ELP1"/>
</dbReference>
<dbReference type="InterPro" id="IPR006849">
    <property type="entry name" value="Elp1"/>
</dbReference>
<dbReference type="InterPro" id="IPR056165">
    <property type="entry name" value="ELP1_b-prop_2"/>
</dbReference>
<dbReference type="InterPro" id="IPR056164">
    <property type="entry name" value="ELP1_N_b-prop_1"/>
</dbReference>
<dbReference type="InterPro" id="IPR056169">
    <property type="entry name" value="HB_ELP1"/>
</dbReference>
<dbReference type="InterPro" id="IPR056166">
    <property type="entry name" value="TPR_ELP1"/>
</dbReference>
<dbReference type="InterPro" id="IPR015943">
    <property type="entry name" value="WD40/YVTN_repeat-like_dom_sf"/>
</dbReference>
<dbReference type="PANTHER" id="PTHR12747">
    <property type="entry name" value="ELONGATOR COMPLEX PROTEIN 1"/>
    <property type="match status" value="1"/>
</dbReference>
<dbReference type="PANTHER" id="PTHR12747:SF0">
    <property type="entry name" value="ELONGATOR COMPLEX PROTEIN 1"/>
    <property type="match status" value="1"/>
</dbReference>
<dbReference type="Pfam" id="PF23925">
    <property type="entry name" value="A-sol_ELP1"/>
    <property type="match status" value="1"/>
</dbReference>
<dbReference type="Pfam" id="PF04762">
    <property type="entry name" value="Beta-prop_ELP1_1st"/>
    <property type="match status" value="1"/>
</dbReference>
<dbReference type="Pfam" id="PF23797">
    <property type="entry name" value="Beta-prop_ELP1_2nd"/>
    <property type="match status" value="1"/>
</dbReference>
<dbReference type="Pfam" id="PF23936">
    <property type="entry name" value="HB_ELP1"/>
    <property type="match status" value="1"/>
</dbReference>
<dbReference type="Pfam" id="PF23878">
    <property type="entry name" value="TPR_ELP1"/>
    <property type="match status" value="1"/>
</dbReference>
<dbReference type="PIRSF" id="PIRSF017233">
    <property type="entry name" value="IKAP"/>
    <property type="match status" value="1"/>
</dbReference>
<dbReference type="SUPFAM" id="SSF82171">
    <property type="entry name" value="DPP6 N-terminal domain-like"/>
    <property type="match status" value="1"/>
</dbReference>